<name>UBIG_ACIAD</name>
<proteinExistence type="inferred from homology"/>
<dbReference type="EC" id="2.1.1.222" evidence="1"/>
<dbReference type="EC" id="2.1.1.64" evidence="1"/>
<dbReference type="EMBL" id="CR543861">
    <property type="protein sequence ID" value="CAG67026.1"/>
    <property type="molecule type" value="Genomic_DNA"/>
</dbReference>
<dbReference type="RefSeq" id="WP_004930907.1">
    <property type="nucleotide sequence ID" value="NC_005966.1"/>
</dbReference>
<dbReference type="SMR" id="Q6FFY1"/>
<dbReference type="STRING" id="202950.GCA_001485005_01791"/>
<dbReference type="GeneID" id="45232577"/>
<dbReference type="KEGG" id="aci:ACIAD0044"/>
<dbReference type="eggNOG" id="COG2227">
    <property type="taxonomic scope" value="Bacteria"/>
</dbReference>
<dbReference type="HOGENOM" id="CLU_042432_5_0_6"/>
<dbReference type="OrthoDB" id="9801538at2"/>
<dbReference type="BioCyc" id="ASP62977:ACIAD_RS00225-MONOMER"/>
<dbReference type="UniPathway" id="UPA00232"/>
<dbReference type="Proteomes" id="UP000000430">
    <property type="component" value="Chromosome"/>
</dbReference>
<dbReference type="GO" id="GO:0102208">
    <property type="term" value="F:2-polyprenyl-6-hydroxyphenol methylase activity"/>
    <property type="evidence" value="ECO:0007669"/>
    <property type="project" value="UniProtKB-EC"/>
</dbReference>
<dbReference type="GO" id="GO:0061542">
    <property type="term" value="F:3-demethylubiquinol 3-O-methyltransferase activity"/>
    <property type="evidence" value="ECO:0007669"/>
    <property type="project" value="UniProtKB-UniRule"/>
</dbReference>
<dbReference type="GO" id="GO:0010420">
    <property type="term" value="F:polyprenyldihydroxybenzoate methyltransferase activity"/>
    <property type="evidence" value="ECO:0007669"/>
    <property type="project" value="InterPro"/>
</dbReference>
<dbReference type="GO" id="GO:0032259">
    <property type="term" value="P:methylation"/>
    <property type="evidence" value="ECO:0007669"/>
    <property type="project" value="UniProtKB-KW"/>
</dbReference>
<dbReference type="CDD" id="cd02440">
    <property type="entry name" value="AdoMet_MTases"/>
    <property type="match status" value="1"/>
</dbReference>
<dbReference type="FunFam" id="3.40.50.150:FF:000028">
    <property type="entry name" value="Ubiquinone biosynthesis O-methyltransferase"/>
    <property type="match status" value="1"/>
</dbReference>
<dbReference type="Gene3D" id="3.40.50.150">
    <property type="entry name" value="Vaccinia Virus protein VP39"/>
    <property type="match status" value="1"/>
</dbReference>
<dbReference type="HAMAP" id="MF_00472">
    <property type="entry name" value="UbiG"/>
    <property type="match status" value="1"/>
</dbReference>
<dbReference type="InterPro" id="IPR029063">
    <property type="entry name" value="SAM-dependent_MTases_sf"/>
</dbReference>
<dbReference type="InterPro" id="IPR010233">
    <property type="entry name" value="UbiG_MeTrfase"/>
</dbReference>
<dbReference type="NCBIfam" id="TIGR01983">
    <property type="entry name" value="UbiG"/>
    <property type="match status" value="1"/>
</dbReference>
<dbReference type="PANTHER" id="PTHR43464">
    <property type="entry name" value="METHYLTRANSFERASE"/>
    <property type="match status" value="1"/>
</dbReference>
<dbReference type="PANTHER" id="PTHR43464:SF19">
    <property type="entry name" value="UBIQUINONE BIOSYNTHESIS O-METHYLTRANSFERASE, MITOCHONDRIAL"/>
    <property type="match status" value="1"/>
</dbReference>
<dbReference type="Pfam" id="PF13489">
    <property type="entry name" value="Methyltransf_23"/>
    <property type="match status" value="1"/>
</dbReference>
<dbReference type="SUPFAM" id="SSF53335">
    <property type="entry name" value="S-adenosyl-L-methionine-dependent methyltransferases"/>
    <property type="match status" value="1"/>
</dbReference>
<reference key="1">
    <citation type="journal article" date="2004" name="Nucleic Acids Res.">
        <title>Unique features revealed by the genome sequence of Acinetobacter sp. ADP1, a versatile and naturally transformation competent bacterium.</title>
        <authorList>
            <person name="Barbe V."/>
            <person name="Vallenet D."/>
            <person name="Fonknechten N."/>
            <person name="Kreimeyer A."/>
            <person name="Oztas S."/>
            <person name="Labarre L."/>
            <person name="Cruveiller S."/>
            <person name="Robert C."/>
            <person name="Duprat S."/>
            <person name="Wincker P."/>
            <person name="Ornston L.N."/>
            <person name="Weissenbach J."/>
            <person name="Marliere P."/>
            <person name="Cohen G.N."/>
            <person name="Medigue C."/>
        </authorList>
    </citation>
    <scope>NUCLEOTIDE SEQUENCE [LARGE SCALE GENOMIC DNA]</scope>
    <source>
        <strain>ATCC 33305 / BD413 / ADP1</strain>
    </source>
</reference>
<protein>
    <recommendedName>
        <fullName evidence="1">Ubiquinone biosynthesis O-methyltransferase</fullName>
    </recommendedName>
    <alternativeName>
        <fullName evidence="1">2-polyprenyl-6-hydroxyphenol methylase</fullName>
        <ecNumber evidence="1">2.1.1.222</ecNumber>
    </alternativeName>
    <alternativeName>
        <fullName evidence="1">3-demethylubiquinone 3-O-methyltransferase</fullName>
        <ecNumber evidence="1">2.1.1.64</ecNumber>
    </alternativeName>
</protein>
<accession>Q6FFY1</accession>
<organism>
    <name type="scientific">Acinetobacter baylyi (strain ATCC 33305 / BD413 / ADP1)</name>
    <dbReference type="NCBI Taxonomy" id="62977"/>
    <lineage>
        <taxon>Bacteria</taxon>
        <taxon>Pseudomonadati</taxon>
        <taxon>Pseudomonadota</taxon>
        <taxon>Gammaproteobacteria</taxon>
        <taxon>Moraxellales</taxon>
        <taxon>Moraxellaceae</taxon>
        <taxon>Acinetobacter</taxon>
    </lineage>
</organism>
<sequence length="238" mass="26744">MSQLNVDPQEIAKFEALAAKWWDQHSEFRPLHQINPLRLNWIDEHAGGLAGKKVLDVGCGGGILAESMARRGADVLGIDMGEAPLNVARLHAEQEQVANIEYRQIPVEELAQEQAGQYDIVTCMEMMEHVPDPASIIKACQTLVKPGGHVFFSTINRNPKSYLFAIIGAEYVLRLLPKGTHDYHKFIRPSEMAHDIREAGLKLKDMTGLHYNPLTKHYWLAPNVDVNYMVHTLKEGQS</sequence>
<feature type="chain" id="PRO_0000193364" description="Ubiquinone biosynthesis O-methyltransferase">
    <location>
        <begin position="1"/>
        <end position="238"/>
    </location>
</feature>
<feature type="binding site" evidence="1">
    <location>
        <position position="38"/>
    </location>
    <ligand>
        <name>S-adenosyl-L-methionine</name>
        <dbReference type="ChEBI" id="CHEBI:59789"/>
    </ligand>
</feature>
<feature type="binding site" evidence="1">
    <location>
        <position position="58"/>
    </location>
    <ligand>
        <name>S-adenosyl-L-methionine</name>
        <dbReference type="ChEBI" id="CHEBI:59789"/>
    </ligand>
</feature>
<feature type="binding site" evidence="1">
    <location>
        <position position="79"/>
    </location>
    <ligand>
        <name>S-adenosyl-L-methionine</name>
        <dbReference type="ChEBI" id="CHEBI:59789"/>
    </ligand>
</feature>
<feature type="binding site" evidence="1">
    <location>
        <position position="124"/>
    </location>
    <ligand>
        <name>S-adenosyl-L-methionine</name>
        <dbReference type="ChEBI" id="CHEBI:59789"/>
    </ligand>
</feature>
<evidence type="ECO:0000255" key="1">
    <source>
        <dbReference type="HAMAP-Rule" id="MF_00472"/>
    </source>
</evidence>
<gene>
    <name evidence="1" type="primary">ubiG</name>
    <name type="ordered locus">ACIAD0044</name>
</gene>
<keyword id="KW-0489">Methyltransferase</keyword>
<keyword id="KW-0949">S-adenosyl-L-methionine</keyword>
<keyword id="KW-0808">Transferase</keyword>
<keyword id="KW-0831">Ubiquinone biosynthesis</keyword>
<comment type="function">
    <text evidence="1">O-methyltransferase that catalyzes the 2 O-methylation steps in the ubiquinone biosynthetic pathway.</text>
</comment>
<comment type="catalytic activity">
    <reaction evidence="1">
        <text>a 3-demethylubiquinol + S-adenosyl-L-methionine = a ubiquinol + S-adenosyl-L-homocysteine + H(+)</text>
        <dbReference type="Rhea" id="RHEA:44380"/>
        <dbReference type="Rhea" id="RHEA-COMP:9566"/>
        <dbReference type="Rhea" id="RHEA-COMP:10914"/>
        <dbReference type="ChEBI" id="CHEBI:15378"/>
        <dbReference type="ChEBI" id="CHEBI:17976"/>
        <dbReference type="ChEBI" id="CHEBI:57856"/>
        <dbReference type="ChEBI" id="CHEBI:59789"/>
        <dbReference type="ChEBI" id="CHEBI:84422"/>
        <dbReference type="EC" id="2.1.1.64"/>
    </reaction>
</comment>
<comment type="catalytic activity">
    <reaction evidence="1">
        <text>a 3-(all-trans-polyprenyl)benzene-1,2-diol + S-adenosyl-L-methionine = a 2-methoxy-6-(all-trans-polyprenyl)phenol + S-adenosyl-L-homocysteine + H(+)</text>
        <dbReference type="Rhea" id="RHEA:31411"/>
        <dbReference type="Rhea" id="RHEA-COMP:9550"/>
        <dbReference type="Rhea" id="RHEA-COMP:9551"/>
        <dbReference type="ChEBI" id="CHEBI:15378"/>
        <dbReference type="ChEBI" id="CHEBI:57856"/>
        <dbReference type="ChEBI" id="CHEBI:59789"/>
        <dbReference type="ChEBI" id="CHEBI:62729"/>
        <dbReference type="ChEBI" id="CHEBI:62731"/>
        <dbReference type="EC" id="2.1.1.222"/>
    </reaction>
</comment>
<comment type="pathway">
    <text evidence="1">Cofactor biosynthesis; ubiquinone biosynthesis.</text>
</comment>
<comment type="similarity">
    <text evidence="1">Belongs to the methyltransferase superfamily. UbiG/COQ3 family.</text>
</comment>